<proteinExistence type="inferred from homology"/>
<dbReference type="EMBL" id="CP000027">
    <property type="protein sequence ID" value="AAW40246.1"/>
    <property type="molecule type" value="Genomic_DNA"/>
</dbReference>
<dbReference type="RefSeq" id="WP_010936282.1">
    <property type="nucleotide sequence ID" value="NC_002936.3"/>
</dbReference>
<dbReference type="SMR" id="Q3Z950"/>
<dbReference type="FunCoup" id="Q3Z950">
    <property type="interactions" value="366"/>
</dbReference>
<dbReference type="STRING" id="243164.DET0505"/>
<dbReference type="GeneID" id="3230210"/>
<dbReference type="KEGG" id="det:DET0505"/>
<dbReference type="PATRIC" id="fig|243164.10.peg.483"/>
<dbReference type="eggNOG" id="COG0102">
    <property type="taxonomic scope" value="Bacteria"/>
</dbReference>
<dbReference type="HOGENOM" id="CLU_082184_2_2_0"/>
<dbReference type="InParanoid" id="Q3Z950"/>
<dbReference type="Proteomes" id="UP000008289">
    <property type="component" value="Chromosome"/>
</dbReference>
<dbReference type="GO" id="GO:0022625">
    <property type="term" value="C:cytosolic large ribosomal subunit"/>
    <property type="evidence" value="ECO:0007669"/>
    <property type="project" value="TreeGrafter"/>
</dbReference>
<dbReference type="GO" id="GO:0003729">
    <property type="term" value="F:mRNA binding"/>
    <property type="evidence" value="ECO:0007669"/>
    <property type="project" value="TreeGrafter"/>
</dbReference>
<dbReference type="GO" id="GO:0003735">
    <property type="term" value="F:structural constituent of ribosome"/>
    <property type="evidence" value="ECO:0007669"/>
    <property type="project" value="InterPro"/>
</dbReference>
<dbReference type="GO" id="GO:0017148">
    <property type="term" value="P:negative regulation of translation"/>
    <property type="evidence" value="ECO:0007669"/>
    <property type="project" value="TreeGrafter"/>
</dbReference>
<dbReference type="GO" id="GO:0006412">
    <property type="term" value="P:translation"/>
    <property type="evidence" value="ECO:0007669"/>
    <property type="project" value="UniProtKB-UniRule"/>
</dbReference>
<dbReference type="CDD" id="cd00392">
    <property type="entry name" value="Ribosomal_L13"/>
    <property type="match status" value="1"/>
</dbReference>
<dbReference type="Gene3D" id="3.90.1180.10">
    <property type="entry name" value="Ribosomal protein L13"/>
    <property type="match status" value="1"/>
</dbReference>
<dbReference type="HAMAP" id="MF_01366">
    <property type="entry name" value="Ribosomal_uL13"/>
    <property type="match status" value="1"/>
</dbReference>
<dbReference type="InterPro" id="IPR005822">
    <property type="entry name" value="Ribosomal_uL13"/>
</dbReference>
<dbReference type="InterPro" id="IPR005823">
    <property type="entry name" value="Ribosomal_uL13_bac-type"/>
</dbReference>
<dbReference type="InterPro" id="IPR023563">
    <property type="entry name" value="Ribosomal_uL13_CS"/>
</dbReference>
<dbReference type="InterPro" id="IPR036899">
    <property type="entry name" value="Ribosomal_uL13_sf"/>
</dbReference>
<dbReference type="NCBIfam" id="TIGR01066">
    <property type="entry name" value="rplM_bact"/>
    <property type="match status" value="1"/>
</dbReference>
<dbReference type="PANTHER" id="PTHR11545:SF2">
    <property type="entry name" value="LARGE RIBOSOMAL SUBUNIT PROTEIN UL13M"/>
    <property type="match status" value="1"/>
</dbReference>
<dbReference type="PANTHER" id="PTHR11545">
    <property type="entry name" value="RIBOSOMAL PROTEIN L13"/>
    <property type="match status" value="1"/>
</dbReference>
<dbReference type="Pfam" id="PF00572">
    <property type="entry name" value="Ribosomal_L13"/>
    <property type="match status" value="1"/>
</dbReference>
<dbReference type="PIRSF" id="PIRSF002181">
    <property type="entry name" value="Ribosomal_L13"/>
    <property type="match status" value="1"/>
</dbReference>
<dbReference type="SUPFAM" id="SSF52161">
    <property type="entry name" value="Ribosomal protein L13"/>
    <property type="match status" value="1"/>
</dbReference>
<dbReference type="PROSITE" id="PS00783">
    <property type="entry name" value="RIBOSOMAL_L13"/>
    <property type="match status" value="1"/>
</dbReference>
<comment type="function">
    <text evidence="1">This protein is one of the early assembly proteins of the 50S ribosomal subunit, although it is not seen to bind rRNA by itself. It is important during the early stages of 50S assembly.</text>
</comment>
<comment type="subunit">
    <text evidence="1">Part of the 50S ribosomal subunit.</text>
</comment>
<comment type="similarity">
    <text evidence="1">Belongs to the universal ribosomal protein uL13 family.</text>
</comment>
<protein>
    <recommendedName>
        <fullName evidence="1">Large ribosomal subunit protein uL13</fullName>
    </recommendedName>
    <alternativeName>
        <fullName evidence="2">50S ribosomal protein L13</fullName>
    </alternativeName>
</protein>
<gene>
    <name evidence="1" type="primary">rplM</name>
    <name type="ordered locus">DET0505</name>
</gene>
<reference key="1">
    <citation type="journal article" date="2005" name="Science">
        <title>Genome sequence of the PCE-dechlorinating bacterium Dehalococcoides ethenogenes.</title>
        <authorList>
            <person name="Seshadri R."/>
            <person name="Adrian L."/>
            <person name="Fouts D.E."/>
            <person name="Eisen J.A."/>
            <person name="Phillippy A.M."/>
            <person name="Methe B.A."/>
            <person name="Ward N.L."/>
            <person name="Nelson W.C."/>
            <person name="DeBoy R.T."/>
            <person name="Khouri H.M."/>
            <person name="Kolonay J.F."/>
            <person name="Dodson R.J."/>
            <person name="Daugherty S.C."/>
            <person name="Brinkac L.M."/>
            <person name="Sullivan S.A."/>
            <person name="Madupu R."/>
            <person name="Nelson K.E."/>
            <person name="Kang K.H."/>
            <person name="Impraim M."/>
            <person name="Tran K."/>
            <person name="Robinson J.M."/>
            <person name="Forberger H.A."/>
            <person name="Fraser C.M."/>
            <person name="Zinder S.H."/>
            <person name="Heidelberg J.F."/>
        </authorList>
    </citation>
    <scope>NUCLEOTIDE SEQUENCE [LARGE SCALE GENOMIC DNA]</scope>
    <source>
        <strain>ATCC BAA-2266 / KCTC 15142 / 195</strain>
    </source>
</reference>
<keyword id="KW-0687">Ribonucleoprotein</keyword>
<keyword id="KW-0689">Ribosomal protein</keyword>
<sequence>MNTYTVKASDIKRDWHVIDASGRVLGEVAAEAAKYLMGKHKPMFCRNLDCGDYVVIINAKKVTVTGNKLDQKIYYRHSGFPGGFRQEKLGDLLKTKPLFVIEHAVKGMIPRNTLGAQILAKLKVYEGEEHPHASQTGEVSKES</sequence>
<evidence type="ECO:0000255" key="1">
    <source>
        <dbReference type="HAMAP-Rule" id="MF_01366"/>
    </source>
</evidence>
<evidence type="ECO:0000305" key="2"/>
<name>RL13_DEHM1</name>
<organism>
    <name type="scientific">Dehalococcoides mccartyi (strain ATCC BAA-2266 / KCTC 15142 / 195)</name>
    <name type="common">Dehalococcoides ethenogenes (strain 195)</name>
    <dbReference type="NCBI Taxonomy" id="243164"/>
    <lineage>
        <taxon>Bacteria</taxon>
        <taxon>Bacillati</taxon>
        <taxon>Chloroflexota</taxon>
        <taxon>Dehalococcoidia</taxon>
        <taxon>Dehalococcoidales</taxon>
        <taxon>Dehalococcoidaceae</taxon>
        <taxon>Dehalococcoides</taxon>
    </lineage>
</organism>
<feature type="chain" id="PRO_1000055374" description="Large ribosomal subunit protein uL13">
    <location>
        <begin position="1"/>
        <end position="143"/>
    </location>
</feature>
<accession>Q3Z950</accession>